<evidence type="ECO:0000250" key="1"/>
<evidence type="ECO:0000255" key="2"/>
<evidence type="ECO:0000256" key="3">
    <source>
        <dbReference type="SAM" id="MobiDB-lite"/>
    </source>
</evidence>
<evidence type="ECO:0000269" key="4">
    <source>
    </source>
</evidence>
<evidence type="ECO:0000305" key="5"/>
<evidence type="ECO:0007744" key="6">
    <source>
    </source>
</evidence>
<sequence>MEEDEPMGGGESEPEQRKSGTPRLYIKELVMRNFKSYAGEQRVGPFHKSFSAVVGPNGSGKSNVIDAMLFVFGKRAKQMRLNKVSELIHNSTNHQNLDSAGVSVQFEEIIDLENGLYETVPGSDFMITRVAFRDNSSKYYINERSSNFTEVTKKLKGKGVDLDNNRFLILQGEVEQISLMKPKAQGPHDEGFLEYLEDIIGTNKYVEKIDELNKQLETLNESRSGVVQMVKLAEKERDNLEGLKDEAETYMLKELSHLKWQEKATKMAYEDTVAKITEQRDSLQNLENSLKDERVKMDESNEELKKFESVHEKHKKRQEVLDNELRACKEKFKEFERQDVKHREDLKHVKQKIKKLEDKLEKDSSKIGDMTKESEDSSNLIPKLQENIPKLQKVLLDEEKKLEEIKAIAKVETEGYRSELTKIRAELEPWEKDLIVHRGKLDVASSESELLSKKHEAALKAFTDAQKQLSDISTRKKEKAAATTSWKADIKKKKQEAIEARKVEEESLKEQETLVPQEQAAREKVAELKSAMNSEKSQNEVLKAVLRAKENNQIEGIYGRMGDLGAIDAKYDVAISTACAGLDYIVVETTSSAQACVELLRKGNLGFATFMILEKQTDHIHKLKEKVKTPEDVPRLFDLVRVKDERMKLAFYAALGNTVVAKDLDQATRIAYGGNREFRRVVALDGALFEKSGTMSGGGGKARGGRMGTSIRATGVSGEAVANAENELSKIVDMLNNIREKVGNAVRQYRAAENEVSGLEMELAKSQREIESLNSEHNYLEKQLASLEAASQPKTDEIDRLKELKKIISKEEKEIENLEKGSKQLKDKLQTNIENAGGEKLKGQKAKVEKIQTDIDKNNTEINRCNVQIETNQKLIKKLTKGIEEATREKERLEGEKENLHVTFKDITQKAFEIQETYKKTQQLIDEHKDVLTGAKSDYENLKKSVDELKASRVDAEFKVQDMKKKYNELEMREKGYKKKLNDLQIAFTKHMEQIQKDLVDPDKLQATLMDNNLNEACDLKRALEMVALLEAQLKELNPNLDSIAEYRSKVELYNGRVDELNSVTQERDDTRKQYDELRKRRLDEFMAGFNTISLKLKEMYQMITLGGDAELELVDSLDPFSEGVVFSVRPPKKSWKNIANLSGGEKTLSSLALVFALHHYKPTPLYVMDEIDAALDFKNVSIVGHYVKDRTKDAQFIIISLRNNMFELADRLVGIYKTDNCTKSITINPGSFAVCQKTPA</sequence>
<dbReference type="EMBL" id="AB015468">
    <property type="protein sequence ID" value="BAB10693.1"/>
    <property type="molecule type" value="Genomic_DNA"/>
</dbReference>
<dbReference type="EMBL" id="CP002688">
    <property type="protein sequence ID" value="AED95694.1"/>
    <property type="molecule type" value="Genomic_DNA"/>
</dbReference>
<dbReference type="RefSeq" id="NP_199671.1">
    <molecule id="Q9FJL0-1"/>
    <property type="nucleotide sequence ID" value="NM_124236.3"/>
</dbReference>
<dbReference type="SMR" id="Q9FJL0"/>
<dbReference type="BioGRID" id="20163">
    <property type="interactions" value="3"/>
</dbReference>
<dbReference type="FunCoup" id="Q9FJL0">
    <property type="interactions" value="2894"/>
</dbReference>
<dbReference type="STRING" id="3702.Q9FJL0"/>
<dbReference type="iPTMnet" id="Q9FJL0"/>
<dbReference type="PaxDb" id="3702-AT5G48600.2"/>
<dbReference type="ProteomicsDB" id="228199">
    <molecule id="Q9FJL0-1"/>
</dbReference>
<dbReference type="EnsemblPlants" id="AT5G48600.1">
    <molecule id="Q9FJL0-1"/>
    <property type="protein sequence ID" value="AT5G48600.1"/>
    <property type="gene ID" value="AT5G48600"/>
</dbReference>
<dbReference type="GeneID" id="834917"/>
<dbReference type="Gramene" id="AT5G48600.1">
    <molecule id="Q9FJL0-1"/>
    <property type="protein sequence ID" value="AT5G48600.1"/>
    <property type="gene ID" value="AT5G48600"/>
</dbReference>
<dbReference type="KEGG" id="ath:AT5G48600"/>
<dbReference type="Araport" id="AT5G48600"/>
<dbReference type="TAIR" id="AT5G48600">
    <property type="gene designation" value="SMC3"/>
</dbReference>
<dbReference type="eggNOG" id="KOG0996">
    <property type="taxonomic scope" value="Eukaryota"/>
</dbReference>
<dbReference type="HOGENOM" id="CLU_001042_4_1_1"/>
<dbReference type="InParanoid" id="Q9FJL0"/>
<dbReference type="PhylomeDB" id="Q9FJL0"/>
<dbReference type="CD-CODE" id="4299E36E">
    <property type="entry name" value="Nucleolus"/>
</dbReference>
<dbReference type="PRO" id="PR:Q9FJL0"/>
<dbReference type="Proteomes" id="UP000006548">
    <property type="component" value="Chromosome 5"/>
</dbReference>
<dbReference type="ExpressionAtlas" id="Q9FJL0">
    <property type="expression patterns" value="baseline and differential"/>
</dbReference>
<dbReference type="GO" id="GO:0005694">
    <property type="term" value="C:chromosome"/>
    <property type="evidence" value="ECO:0007669"/>
    <property type="project" value="InterPro"/>
</dbReference>
<dbReference type="GO" id="GO:0005634">
    <property type="term" value="C:nucleus"/>
    <property type="evidence" value="ECO:0007669"/>
    <property type="project" value="UniProtKB-SubCell"/>
</dbReference>
<dbReference type="GO" id="GO:0005524">
    <property type="term" value="F:ATP binding"/>
    <property type="evidence" value="ECO:0007669"/>
    <property type="project" value="UniProtKB-KW"/>
</dbReference>
<dbReference type="GO" id="GO:0016887">
    <property type="term" value="F:ATP hydrolysis activity"/>
    <property type="evidence" value="ECO:0007669"/>
    <property type="project" value="InterPro"/>
</dbReference>
<dbReference type="GO" id="GO:0051301">
    <property type="term" value="P:cell division"/>
    <property type="evidence" value="ECO:0007669"/>
    <property type="project" value="UniProtKB-KW"/>
</dbReference>
<dbReference type="GO" id="GO:0009793">
    <property type="term" value="P:embryo development ending in seed dormancy"/>
    <property type="evidence" value="ECO:0000315"/>
    <property type="project" value="UniProtKB"/>
</dbReference>
<dbReference type="GO" id="GO:0051321">
    <property type="term" value="P:meiotic cell cycle"/>
    <property type="evidence" value="ECO:0007669"/>
    <property type="project" value="UniProtKB-KW"/>
</dbReference>
<dbReference type="GO" id="GO:0007076">
    <property type="term" value="P:mitotic chromosome condensation"/>
    <property type="evidence" value="ECO:0000315"/>
    <property type="project" value="UniProtKB"/>
</dbReference>
<dbReference type="GO" id="GO:0000070">
    <property type="term" value="P:mitotic sister chromatid segregation"/>
    <property type="evidence" value="ECO:0000315"/>
    <property type="project" value="UniProtKB"/>
</dbReference>
<dbReference type="FunFam" id="1.20.1060.20:FF:000003">
    <property type="entry name" value="Structural maintenance of chromosomes 4"/>
    <property type="match status" value="1"/>
</dbReference>
<dbReference type="FunFam" id="3.30.70.1620:FF:000003">
    <property type="entry name" value="Structural maintenance of chromosomes 4"/>
    <property type="match status" value="1"/>
</dbReference>
<dbReference type="FunFam" id="3.40.50.300:FF:000481">
    <property type="entry name" value="Structural maintenance of chromosomes 4"/>
    <property type="match status" value="1"/>
</dbReference>
<dbReference type="FunFam" id="3.40.50.300:FF:000585">
    <property type="entry name" value="Structural maintenance of chromosomes 4"/>
    <property type="match status" value="1"/>
</dbReference>
<dbReference type="Gene3D" id="1.10.287.1490">
    <property type="match status" value="1"/>
</dbReference>
<dbReference type="Gene3D" id="1.20.1060.20">
    <property type="match status" value="1"/>
</dbReference>
<dbReference type="Gene3D" id="3.30.70.1620">
    <property type="match status" value="1"/>
</dbReference>
<dbReference type="Gene3D" id="3.40.50.300">
    <property type="entry name" value="P-loop containing nucleotide triphosphate hydrolases"/>
    <property type="match status" value="2"/>
</dbReference>
<dbReference type="InterPro" id="IPR027417">
    <property type="entry name" value="P-loop_NTPase"/>
</dbReference>
<dbReference type="InterPro" id="IPR003395">
    <property type="entry name" value="RecF/RecN/SMC_N"/>
</dbReference>
<dbReference type="InterPro" id="IPR024704">
    <property type="entry name" value="SMC"/>
</dbReference>
<dbReference type="InterPro" id="IPR010935">
    <property type="entry name" value="SMC_hinge"/>
</dbReference>
<dbReference type="InterPro" id="IPR036277">
    <property type="entry name" value="SMC_hinge_sf"/>
</dbReference>
<dbReference type="PANTHER" id="PTHR18937:SF172">
    <property type="entry name" value="STRUCTURAL MAINTENANCE OF CHROMOSOMES PROTEIN"/>
    <property type="match status" value="1"/>
</dbReference>
<dbReference type="PANTHER" id="PTHR18937">
    <property type="entry name" value="STRUCTURAL MAINTENANCE OF CHROMOSOMES SMC FAMILY MEMBER"/>
    <property type="match status" value="1"/>
</dbReference>
<dbReference type="Pfam" id="PF06470">
    <property type="entry name" value="SMC_hinge"/>
    <property type="match status" value="1"/>
</dbReference>
<dbReference type="Pfam" id="PF02463">
    <property type="entry name" value="SMC_N"/>
    <property type="match status" value="1"/>
</dbReference>
<dbReference type="PIRSF" id="PIRSF005719">
    <property type="entry name" value="SMC"/>
    <property type="match status" value="1"/>
</dbReference>
<dbReference type="SMART" id="SM00968">
    <property type="entry name" value="SMC_hinge"/>
    <property type="match status" value="1"/>
</dbReference>
<dbReference type="SUPFAM" id="SSF52540">
    <property type="entry name" value="P-loop containing nucleoside triphosphate hydrolases"/>
    <property type="match status" value="1"/>
</dbReference>
<dbReference type="SUPFAM" id="SSF75553">
    <property type="entry name" value="Smc hinge domain"/>
    <property type="match status" value="1"/>
</dbReference>
<accession>Q9FJL0</accession>
<comment type="function">
    <text evidence="4">Central component of the condensin complex, a complex required for conversion of interphase chromatin into mitotic-like condense chromosomes. The condensin complex probably introduces positive supercoils into relaxed DNA in the presence of type I topoisomerases and converts nicked DNA into positive knotted forms in the presence of type II topoisomerases. Also involved in chromosome segregation in meiosis.</text>
</comment>
<comment type="subunit">
    <text>Forms a heterodimer with a SMC2 subfamily member. Component of the condensin complex, which contains the SMC2 and SMC4 heterodimer, and three non SMC subunits that probably regulate the complex: CAPH, CAPD2 and CAPG.</text>
</comment>
<comment type="subcellular location">
    <subcellularLocation>
        <location>Nucleus</location>
    </subcellularLocation>
    <text evidence="1">Associates with chromatin.</text>
</comment>
<comment type="alternative products">
    <event type="alternative splicing"/>
    <isoform>
        <id>Q9FJL0-1</id>
        <name>1</name>
        <sequence type="displayed"/>
    </isoform>
    <text>A number of isoforms are produced. According to EST sequences.</text>
</comment>
<comment type="tissue specificity">
    <text evidence="4">Highly expressed in seedlings and inflorescences.</text>
</comment>
<comment type="domain">
    <text>The SMC hinge domain, which separates the large intramolecular coiled coil regions, allows the heterodimerization with a SMC2 subfamily member, forming a V-shaped heterodimer.</text>
</comment>
<comment type="similarity">
    <text evidence="5">Belongs to the SMC family. SMC4 subfamily.</text>
</comment>
<gene>
    <name type="primary">SMC4</name>
    <name type="synonym">CAP-C</name>
    <name type="ordered locus">At5g48600</name>
    <name type="ORF">K15N18.7</name>
</gene>
<proteinExistence type="evidence at protein level"/>
<name>SMC4_ARATH</name>
<keyword id="KW-0007">Acetylation</keyword>
<keyword id="KW-0025">Alternative splicing</keyword>
<keyword id="KW-0067">ATP-binding</keyword>
<keyword id="KW-0131">Cell cycle</keyword>
<keyword id="KW-0132">Cell division</keyword>
<keyword id="KW-0175">Coiled coil</keyword>
<keyword id="KW-0226">DNA condensation</keyword>
<keyword id="KW-0469">Meiosis</keyword>
<keyword id="KW-0498">Mitosis</keyword>
<keyword id="KW-0547">Nucleotide-binding</keyword>
<keyword id="KW-0539">Nucleus</keyword>
<keyword id="KW-1185">Reference proteome</keyword>
<protein>
    <recommendedName>
        <fullName>Structural maintenance of chromosomes protein 4</fullName>
        <shortName>AtSMC4</shortName>
        <shortName>SMC protein 4</shortName>
        <shortName>SMC-4</shortName>
    </recommendedName>
    <alternativeName>
        <fullName>Chromosome-associated protein C</fullName>
        <shortName>AtCAP-C</shortName>
    </alternativeName>
</protein>
<organism>
    <name type="scientific">Arabidopsis thaliana</name>
    <name type="common">Mouse-ear cress</name>
    <dbReference type="NCBI Taxonomy" id="3702"/>
    <lineage>
        <taxon>Eukaryota</taxon>
        <taxon>Viridiplantae</taxon>
        <taxon>Streptophyta</taxon>
        <taxon>Embryophyta</taxon>
        <taxon>Tracheophyta</taxon>
        <taxon>Spermatophyta</taxon>
        <taxon>Magnoliopsida</taxon>
        <taxon>eudicotyledons</taxon>
        <taxon>Gunneridae</taxon>
        <taxon>Pentapetalae</taxon>
        <taxon>rosids</taxon>
        <taxon>malvids</taxon>
        <taxon>Brassicales</taxon>
        <taxon>Brassicaceae</taxon>
        <taxon>Camelineae</taxon>
        <taxon>Arabidopsis</taxon>
    </lineage>
</organism>
<feature type="chain" id="PRO_0000284896" description="Structural maintenance of chromosomes protein 4">
    <location>
        <begin position="1"/>
        <end position="1241"/>
    </location>
</feature>
<feature type="domain" description="Zinc-hook">
    <location>
        <begin position="25"/>
        <end position="1224"/>
    </location>
</feature>
<feature type="domain" description="SMC hinge">
    <location>
        <begin position="555"/>
        <end position="671"/>
    </location>
</feature>
<feature type="region of interest" description="Disordered" evidence="3">
    <location>
        <begin position="1"/>
        <end position="22"/>
    </location>
</feature>
<feature type="coiled-coil region" evidence="2">
    <location>
        <begin position="201"/>
        <end position="552"/>
    </location>
</feature>
<feature type="coiled-coil region" evidence="2">
    <location>
        <begin position="719"/>
        <end position="1085"/>
    </location>
</feature>
<feature type="binding site" evidence="2">
    <location>
        <begin position="55"/>
        <end position="62"/>
    </location>
    <ligand>
        <name>ATP</name>
        <dbReference type="ChEBI" id="CHEBI:30616"/>
    </ligand>
</feature>
<feature type="modified residue" description="N-acetylmethionine" evidence="6">
    <location>
        <position position="1"/>
    </location>
</feature>
<reference key="1">
    <citation type="journal article" date="1998" name="DNA Res.">
        <title>Structural analysis of Arabidopsis thaliana chromosome 5. VII. Sequence features of the regions of 1,013,767 bp covered by sixteen physically assigned P1 and TAC clones.</title>
        <authorList>
            <person name="Nakamura Y."/>
            <person name="Sato S."/>
            <person name="Asamizu E."/>
            <person name="Kaneko T."/>
            <person name="Kotani H."/>
            <person name="Miyajima N."/>
            <person name="Tabata S."/>
        </authorList>
    </citation>
    <scope>NUCLEOTIDE SEQUENCE [LARGE SCALE GENOMIC DNA]</scope>
    <source>
        <strain>cv. Columbia</strain>
    </source>
</reference>
<reference key="2">
    <citation type="journal article" date="2017" name="Plant J.">
        <title>Araport11: a complete reannotation of the Arabidopsis thaliana reference genome.</title>
        <authorList>
            <person name="Cheng C.Y."/>
            <person name="Krishnakumar V."/>
            <person name="Chan A.P."/>
            <person name="Thibaud-Nissen F."/>
            <person name="Schobel S."/>
            <person name="Town C.D."/>
        </authorList>
    </citation>
    <scope>GENOME REANNOTATION</scope>
    <source>
        <strain>cv. Columbia</strain>
    </source>
</reference>
<reference key="3">
    <citation type="journal article" date="2006" name="Planta">
        <title>Disruption of the Arabidopsis SMC4 gene, AtCAP-C, compromises gametogenesis and embryogenesis.</title>
        <authorList>
            <person name="Siddiqui N.U."/>
            <person name="Rusyniak S."/>
            <person name="Hasenkampf C.A."/>
            <person name="Riggs C.D."/>
        </authorList>
    </citation>
    <scope>FUNCTION</scope>
    <scope>TISSUE SPECIFICITY</scope>
</reference>
<reference key="4">
    <citation type="journal article" date="2012" name="Mol. Cell. Proteomics">
        <title>Comparative large-scale characterisation of plant vs. mammal proteins reveals similar and idiosyncratic N-alpha acetylation features.</title>
        <authorList>
            <person name="Bienvenut W.V."/>
            <person name="Sumpton D."/>
            <person name="Martinez A."/>
            <person name="Lilla S."/>
            <person name="Espagne C."/>
            <person name="Meinnel T."/>
            <person name="Giglione C."/>
        </authorList>
    </citation>
    <scope>ACETYLATION [LARGE SCALE ANALYSIS] AT MET-1</scope>
    <scope>IDENTIFICATION BY MASS SPECTROMETRY [LARGE SCALE ANALYSIS]</scope>
</reference>